<sequence>MSRRCELTAKGPQVGHKVSHSNIKSKRRFLPNLCNVTLMSETLGQSVRLRVSTNALKSVDHNGGLDAFLLKANIANLSPKAADLKRQIEKKKLAAAS</sequence>
<reference key="1">
    <citation type="journal article" date="2008" name="J. Bacteriol.">
        <title>Genome sequence of the chemolithoautotrophic bacterium Oligotropha carboxidovorans OM5T.</title>
        <authorList>
            <person name="Paul D."/>
            <person name="Bridges S."/>
            <person name="Burgess S.C."/>
            <person name="Dandass Y."/>
            <person name="Lawrence M.L."/>
        </authorList>
    </citation>
    <scope>NUCLEOTIDE SEQUENCE [LARGE SCALE GENOMIC DNA]</scope>
    <source>
        <strain>ATCC 49405 / DSM 1227 / KCTC 32145 / OM5</strain>
    </source>
</reference>
<reference key="2">
    <citation type="journal article" date="2011" name="J. Bacteriol.">
        <title>Complete genome sequences of the chemolithoautotrophic Oligotropha carboxidovorans strains OM4 and OM5.</title>
        <authorList>
            <person name="Volland S."/>
            <person name="Rachinger M."/>
            <person name="Strittmatter A."/>
            <person name="Daniel R."/>
            <person name="Gottschalk G."/>
            <person name="Meyer O."/>
        </authorList>
    </citation>
    <scope>NUCLEOTIDE SEQUENCE [LARGE SCALE GENOMIC DNA]</scope>
    <source>
        <strain>ATCC 49405 / DSM 1227 / KCTC 32145 / OM5</strain>
    </source>
</reference>
<organism>
    <name type="scientific">Afipia carboxidovorans (strain ATCC 49405 / DSM 1227 / KCTC 32145 / OM5)</name>
    <name type="common">Oligotropha carboxidovorans</name>
    <dbReference type="NCBI Taxonomy" id="504832"/>
    <lineage>
        <taxon>Bacteria</taxon>
        <taxon>Pseudomonadati</taxon>
        <taxon>Pseudomonadota</taxon>
        <taxon>Alphaproteobacteria</taxon>
        <taxon>Hyphomicrobiales</taxon>
        <taxon>Nitrobacteraceae</taxon>
        <taxon>Afipia</taxon>
    </lineage>
</organism>
<gene>
    <name evidence="1" type="primary">rpmB</name>
    <name type="ordered locus">OCAR_4063</name>
    <name type="ordered locus">OCA5_c04430</name>
</gene>
<dbReference type="EMBL" id="CP001196">
    <property type="protein sequence ID" value="ACI91214.1"/>
    <property type="molecule type" value="Genomic_DNA"/>
</dbReference>
<dbReference type="EMBL" id="CP002826">
    <property type="protein sequence ID" value="AEI05168.1"/>
    <property type="molecule type" value="Genomic_DNA"/>
</dbReference>
<dbReference type="RefSeq" id="WP_012561246.1">
    <property type="nucleotide sequence ID" value="NC_015684.1"/>
</dbReference>
<dbReference type="SMR" id="B6J9Z3"/>
<dbReference type="STRING" id="504832.OCA5_c04430"/>
<dbReference type="KEGG" id="oca:OCAR_4063"/>
<dbReference type="KEGG" id="ocg:OCA5_c04430"/>
<dbReference type="PATRIC" id="fig|504832.7.peg.466"/>
<dbReference type="eggNOG" id="COG0227">
    <property type="taxonomic scope" value="Bacteria"/>
</dbReference>
<dbReference type="HOGENOM" id="CLU_064548_4_2_5"/>
<dbReference type="OrthoDB" id="9805609at2"/>
<dbReference type="Proteomes" id="UP000007730">
    <property type="component" value="Chromosome"/>
</dbReference>
<dbReference type="GO" id="GO:0022625">
    <property type="term" value="C:cytosolic large ribosomal subunit"/>
    <property type="evidence" value="ECO:0007669"/>
    <property type="project" value="TreeGrafter"/>
</dbReference>
<dbReference type="GO" id="GO:0003735">
    <property type="term" value="F:structural constituent of ribosome"/>
    <property type="evidence" value="ECO:0007669"/>
    <property type="project" value="InterPro"/>
</dbReference>
<dbReference type="GO" id="GO:0006412">
    <property type="term" value="P:translation"/>
    <property type="evidence" value="ECO:0007669"/>
    <property type="project" value="UniProtKB-UniRule"/>
</dbReference>
<dbReference type="Gene3D" id="2.30.170.40">
    <property type="entry name" value="Ribosomal protein L28/L24"/>
    <property type="match status" value="1"/>
</dbReference>
<dbReference type="HAMAP" id="MF_00373">
    <property type="entry name" value="Ribosomal_bL28"/>
    <property type="match status" value="1"/>
</dbReference>
<dbReference type="InterPro" id="IPR026569">
    <property type="entry name" value="Ribosomal_bL28"/>
</dbReference>
<dbReference type="InterPro" id="IPR034704">
    <property type="entry name" value="Ribosomal_bL28/bL31-like_sf"/>
</dbReference>
<dbReference type="InterPro" id="IPR001383">
    <property type="entry name" value="Ribosomal_bL28_bact-type"/>
</dbReference>
<dbReference type="InterPro" id="IPR037147">
    <property type="entry name" value="Ribosomal_bL28_sf"/>
</dbReference>
<dbReference type="NCBIfam" id="TIGR00009">
    <property type="entry name" value="L28"/>
    <property type="match status" value="1"/>
</dbReference>
<dbReference type="PANTHER" id="PTHR13528">
    <property type="entry name" value="39S RIBOSOMAL PROTEIN L28, MITOCHONDRIAL"/>
    <property type="match status" value="1"/>
</dbReference>
<dbReference type="PANTHER" id="PTHR13528:SF2">
    <property type="entry name" value="LARGE RIBOSOMAL SUBUNIT PROTEIN BL28M"/>
    <property type="match status" value="1"/>
</dbReference>
<dbReference type="Pfam" id="PF00830">
    <property type="entry name" value="Ribosomal_L28"/>
    <property type="match status" value="1"/>
</dbReference>
<dbReference type="SUPFAM" id="SSF143800">
    <property type="entry name" value="L28p-like"/>
    <property type="match status" value="1"/>
</dbReference>
<feature type="chain" id="PRO_1000121663" description="Large ribosomal subunit protein bL28">
    <location>
        <begin position="1"/>
        <end position="97"/>
    </location>
</feature>
<feature type="region of interest" description="Disordered" evidence="2">
    <location>
        <begin position="1"/>
        <end position="20"/>
    </location>
</feature>
<comment type="similarity">
    <text evidence="1">Belongs to the bacterial ribosomal protein bL28 family.</text>
</comment>
<proteinExistence type="inferred from homology"/>
<protein>
    <recommendedName>
        <fullName evidence="1">Large ribosomal subunit protein bL28</fullName>
    </recommendedName>
    <alternativeName>
        <fullName evidence="3">50S ribosomal protein L28</fullName>
    </alternativeName>
</protein>
<accession>B6J9Z3</accession>
<accession>F8BVA8</accession>
<keyword id="KW-1185">Reference proteome</keyword>
<keyword id="KW-0687">Ribonucleoprotein</keyword>
<keyword id="KW-0689">Ribosomal protein</keyword>
<evidence type="ECO:0000255" key="1">
    <source>
        <dbReference type="HAMAP-Rule" id="MF_00373"/>
    </source>
</evidence>
<evidence type="ECO:0000256" key="2">
    <source>
        <dbReference type="SAM" id="MobiDB-lite"/>
    </source>
</evidence>
<evidence type="ECO:0000305" key="3"/>
<name>RL28_AFIC5</name>